<organism>
    <name type="scientific">Rattus norvegicus</name>
    <name type="common">Rat</name>
    <dbReference type="NCBI Taxonomy" id="10116"/>
    <lineage>
        <taxon>Eukaryota</taxon>
        <taxon>Metazoa</taxon>
        <taxon>Chordata</taxon>
        <taxon>Craniata</taxon>
        <taxon>Vertebrata</taxon>
        <taxon>Euteleostomi</taxon>
        <taxon>Mammalia</taxon>
        <taxon>Eutheria</taxon>
        <taxon>Euarchontoglires</taxon>
        <taxon>Glires</taxon>
        <taxon>Rodentia</taxon>
        <taxon>Myomorpha</taxon>
        <taxon>Muroidea</taxon>
        <taxon>Muridae</taxon>
        <taxon>Murinae</taxon>
        <taxon>Rattus</taxon>
    </lineage>
</organism>
<feature type="signal peptide" evidence="3">
    <location>
        <begin position="1"/>
        <end position="43"/>
    </location>
</feature>
<feature type="chain" id="PRO_0000284803" description="Adherens junction-associated protein 1" evidence="3">
    <location>
        <begin position="44"/>
        <end position="411"/>
    </location>
</feature>
<feature type="topological domain" description="Extracellular" evidence="3">
    <location>
        <begin position="44"/>
        <end position="283"/>
    </location>
</feature>
<feature type="transmembrane region" description="Helical" evidence="3">
    <location>
        <begin position="284"/>
        <end position="304"/>
    </location>
</feature>
<feature type="topological domain" description="Cytoplasmic" evidence="3">
    <location>
        <begin position="305"/>
        <end position="411"/>
    </location>
</feature>
<feature type="region of interest" description="Disordered" evidence="4">
    <location>
        <begin position="62"/>
        <end position="156"/>
    </location>
</feature>
<feature type="region of interest" description="Disordered" evidence="4">
    <location>
        <begin position="242"/>
        <end position="270"/>
    </location>
</feature>
<feature type="region of interest" description="Targeting signals" evidence="1">
    <location>
        <begin position="304"/>
        <end position="411"/>
    </location>
</feature>
<feature type="compositionally biased region" description="Low complexity" evidence="4">
    <location>
        <begin position="62"/>
        <end position="76"/>
    </location>
</feature>
<feature type="compositionally biased region" description="Low complexity" evidence="4">
    <location>
        <begin position="121"/>
        <end position="145"/>
    </location>
</feature>
<feature type="compositionally biased region" description="Low complexity" evidence="4">
    <location>
        <begin position="247"/>
        <end position="264"/>
    </location>
</feature>
<comment type="function">
    <text evidence="1">Plays a role in cell adhesion and cell migration.</text>
</comment>
<comment type="subunit">
    <text evidence="2">Forms a complex with CDH1 and CTNNB1; interacts directly with CTNNB1 (By similarity). Interacts with AP1M2 and with isoform 2 of BSG/CD147 (By similarity).</text>
</comment>
<comment type="subcellular location">
    <subcellularLocation>
        <location evidence="2">Basolateral cell membrane</location>
        <topology evidence="3">Single-pass type I membrane protein</topology>
    </subcellularLocation>
    <subcellularLocation>
        <location evidence="2">Apical cell membrane</location>
        <topology evidence="3">Single-pass type I membrane protein</topology>
    </subcellularLocation>
    <subcellularLocation>
        <location evidence="2">Cell junction</location>
        <location evidence="2">Adherens junction</location>
    </subcellularLocation>
    <text evidence="2">Mainly basolateral. Localization is mediated by AP1M2.</text>
</comment>
<accession>Q4W8E7</accession>
<reference key="1">
    <citation type="submission" date="2004-05" db="EMBL/GenBank/DDBJ databases">
        <title>Characterization of a novel gene from rat brain, Neumo48, that induces morphological changes when overexpressed.</title>
        <authorList>
            <person name="Ishii S."/>
            <person name="Watanabe M."/>
            <person name="Kanbara K."/>
            <person name="Hayasaki H."/>
            <person name="Hayashi H."/>
            <person name="Kagamiyama H."/>
        </authorList>
    </citation>
    <scope>NUCLEOTIDE SEQUENCE [MRNA]</scope>
    <source>
        <tissue>Brain</tissue>
    </source>
</reference>
<gene>
    <name type="primary">Ajap1</name>
    <name type="synonym">Neumo48</name>
</gene>
<dbReference type="EMBL" id="AB179740">
    <property type="protein sequence ID" value="BAD98504.1"/>
    <property type="molecule type" value="mRNA"/>
</dbReference>
<dbReference type="RefSeq" id="NP_001094484.1">
    <property type="nucleotide sequence ID" value="NM_001101014.2"/>
</dbReference>
<dbReference type="RefSeq" id="XP_038966718.1">
    <property type="nucleotide sequence ID" value="XM_039110790.2"/>
</dbReference>
<dbReference type="FunCoup" id="Q4W8E7">
    <property type="interactions" value="1146"/>
</dbReference>
<dbReference type="STRING" id="10116.ENSRNOP00000064502"/>
<dbReference type="GlyGen" id="Q4W8E7">
    <property type="glycosylation" value="1 site"/>
</dbReference>
<dbReference type="iPTMnet" id="Q4W8E7"/>
<dbReference type="PhosphoSitePlus" id="Q4W8E7"/>
<dbReference type="PaxDb" id="10116-ENSRNOP00000064502"/>
<dbReference type="Ensembl" id="ENSRNOT00000100046.1">
    <property type="protein sequence ID" value="ENSRNOP00000093386.1"/>
    <property type="gene ID" value="ENSRNOG00000050137.2"/>
</dbReference>
<dbReference type="GeneID" id="687031"/>
<dbReference type="KEGG" id="rno:687031"/>
<dbReference type="AGR" id="RGD:1590138"/>
<dbReference type="CTD" id="55966"/>
<dbReference type="RGD" id="1590138">
    <property type="gene designation" value="Ajap1"/>
</dbReference>
<dbReference type="eggNOG" id="ENOG502QVMU">
    <property type="taxonomic scope" value="Eukaryota"/>
</dbReference>
<dbReference type="GeneTree" id="ENSGT00510000048586"/>
<dbReference type="InParanoid" id="Q4W8E7"/>
<dbReference type="OMA" id="PEANTFP"/>
<dbReference type="OrthoDB" id="9949932at2759"/>
<dbReference type="PhylomeDB" id="Q4W8E7"/>
<dbReference type="PRO" id="PR:Q4W8E7"/>
<dbReference type="Proteomes" id="UP000002494">
    <property type="component" value="Chromosome 5"/>
</dbReference>
<dbReference type="GO" id="GO:0005912">
    <property type="term" value="C:adherens junction"/>
    <property type="evidence" value="ECO:0000266"/>
    <property type="project" value="RGD"/>
</dbReference>
<dbReference type="GO" id="GO:0016324">
    <property type="term" value="C:apical plasma membrane"/>
    <property type="evidence" value="ECO:0007669"/>
    <property type="project" value="UniProtKB-SubCell"/>
</dbReference>
<dbReference type="GO" id="GO:0016323">
    <property type="term" value="C:basolateral plasma membrane"/>
    <property type="evidence" value="ECO:0000250"/>
    <property type="project" value="UniProtKB"/>
</dbReference>
<dbReference type="GO" id="GO:0009986">
    <property type="term" value="C:cell surface"/>
    <property type="evidence" value="ECO:0000266"/>
    <property type="project" value="RGD"/>
</dbReference>
<dbReference type="GO" id="GO:0044291">
    <property type="term" value="C:cell-cell contact zone"/>
    <property type="evidence" value="ECO:0000266"/>
    <property type="project" value="RGD"/>
</dbReference>
<dbReference type="GO" id="GO:0009898">
    <property type="term" value="C:cytoplasmic side of plasma membrane"/>
    <property type="evidence" value="ECO:0000266"/>
    <property type="project" value="RGD"/>
</dbReference>
<dbReference type="GO" id="GO:0005886">
    <property type="term" value="C:plasma membrane"/>
    <property type="evidence" value="ECO:0000266"/>
    <property type="project" value="RGD"/>
</dbReference>
<dbReference type="GO" id="GO:0008013">
    <property type="term" value="F:beta-catenin binding"/>
    <property type="evidence" value="ECO:0000266"/>
    <property type="project" value="RGD"/>
</dbReference>
<dbReference type="GO" id="GO:0019904">
    <property type="term" value="F:protein domain specific binding"/>
    <property type="evidence" value="ECO:0000266"/>
    <property type="project" value="RGD"/>
</dbReference>
<dbReference type="GO" id="GO:0044877">
    <property type="term" value="F:protein-containing complex binding"/>
    <property type="evidence" value="ECO:0000266"/>
    <property type="project" value="RGD"/>
</dbReference>
<dbReference type="GO" id="GO:0007155">
    <property type="term" value="P:cell adhesion"/>
    <property type="evidence" value="ECO:0007669"/>
    <property type="project" value="UniProtKB-KW"/>
</dbReference>
<dbReference type="GO" id="GO:0001953">
    <property type="term" value="P:negative regulation of cell-matrix adhesion"/>
    <property type="evidence" value="ECO:0000266"/>
    <property type="project" value="RGD"/>
</dbReference>
<dbReference type="GO" id="GO:0061045">
    <property type="term" value="P:negative regulation of wound healing"/>
    <property type="evidence" value="ECO:0000266"/>
    <property type="project" value="RGD"/>
</dbReference>
<dbReference type="GO" id="GO:0030860">
    <property type="term" value="P:regulation of polarized epithelial cell differentiation"/>
    <property type="evidence" value="ECO:0000266"/>
    <property type="project" value="RGD"/>
</dbReference>
<dbReference type="InterPro" id="IPR039239">
    <property type="entry name" value="AJAP1"/>
</dbReference>
<dbReference type="InterPro" id="IPR029198">
    <property type="entry name" value="AJAP1_PANP_C"/>
</dbReference>
<dbReference type="PANTHER" id="PTHR32422">
    <property type="entry name" value="ADHERENS JUNCTION-ASSOCIATED PROTEIN 1"/>
    <property type="match status" value="1"/>
</dbReference>
<dbReference type="PANTHER" id="PTHR32422:SF0">
    <property type="entry name" value="ADHERENS JUNCTION-ASSOCIATED PROTEIN 1"/>
    <property type="match status" value="1"/>
</dbReference>
<dbReference type="Pfam" id="PF15298">
    <property type="entry name" value="AJAP1_PANP_C"/>
    <property type="match status" value="1"/>
</dbReference>
<evidence type="ECO:0000250" key="1"/>
<evidence type="ECO:0000250" key="2">
    <source>
        <dbReference type="UniProtKB" id="Q9UKB5"/>
    </source>
</evidence>
<evidence type="ECO:0000255" key="3"/>
<evidence type="ECO:0000256" key="4">
    <source>
        <dbReference type="SAM" id="MobiDB-lite"/>
    </source>
</evidence>
<keyword id="KW-0130">Cell adhesion</keyword>
<keyword id="KW-0965">Cell junction</keyword>
<keyword id="KW-1003">Cell membrane</keyword>
<keyword id="KW-0472">Membrane</keyword>
<keyword id="KW-1185">Reference proteome</keyword>
<keyword id="KW-0732">Signal</keyword>
<keyword id="KW-0812">Transmembrane</keyword>
<keyword id="KW-1133">Transmembrane helix</keyword>
<protein>
    <recommendedName>
        <fullName>Adherens junction-associated protein 1</fullName>
    </recommendedName>
</protein>
<sequence length="411" mass="44755">MWIQQLLGLSSMPIRWPGRSLGSHLWILIAMLQLAVDFPSCDSLGPGPEFRLLSRPQRPQRLWSLRTGPPTRLPTPAWSPRAARAERAHGPIQMQTPRARRAHRPRDQVATLGPKGGLTKPPAATRSSPSLTSASASSSMTAGAAEHQSLLKRGRRHTHDAEFNDFDFHGGRPTTETEFIAWGPTGDEEALESNTFPGGFGPTTVSILQTRKTTMAATTTTTAASTATAMTLQTKGVTESLDPWKRTPVGVSTTEPSTSPSNNGKDIQPPRILGETSGLAVHQIITITVSLIMVIAALITTLVLKNCCAPSGHTRRNSHQRKMNQQEESCQNLTDFTPARVPSSVDIFTAYNETLQCSHECVRASVPVYADETLHSTGEYKSTFNGNRSSSADRHLIPVAFVSEKWFEISC</sequence>
<name>AJAP1_RAT</name>
<proteinExistence type="evidence at transcript level"/>